<gene>
    <name evidence="1" type="primary">cobT</name>
    <name type="ordered locus">EcHS_A2114</name>
</gene>
<dbReference type="EC" id="2.4.2.21" evidence="1"/>
<dbReference type="EMBL" id="CP000802">
    <property type="protein sequence ID" value="ABV06409.1"/>
    <property type="molecule type" value="Genomic_DNA"/>
</dbReference>
<dbReference type="RefSeq" id="WP_001193781.1">
    <property type="nucleotide sequence ID" value="NC_009800.1"/>
</dbReference>
<dbReference type="SMR" id="A8A1K5"/>
<dbReference type="KEGG" id="ecx:EcHS_A2114"/>
<dbReference type="HOGENOM" id="CLU_002982_0_0_6"/>
<dbReference type="UniPathway" id="UPA00061">
    <property type="reaction ID" value="UER00516"/>
</dbReference>
<dbReference type="GO" id="GO:0008939">
    <property type="term" value="F:nicotinate-nucleotide-dimethylbenzimidazole phosphoribosyltransferase activity"/>
    <property type="evidence" value="ECO:0007669"/>
    <property type="project" value="UniProtKB-UniRule"/>
</dbReference>
<dbReference type="GO" id="GO:0009236">
    <property type="term" value="P:cobalamin biosynthetic process"/>
    <property type="evidence" value="ECO:0007669"/>
    <property type="project" value="UniProtKB-KW"/>
</dbReference>
<dbReference type="CDD" id="cd02439">
    <property type="entry name" value="DMB-PRT_CobT"/>
    <property type="match status" value="1"/>
</dbReference>
<dbReference type="FunFam" id="1.10.1610.10:FF:000001">
    <property type="entry name" value="Nicotinate-nucleotide--dimethylbenzimidazole phosphoribosyltransferase"/>
    <property type="match status" value="1"/>
</dbReference>
<dbReference type="FunFam" id="3.40.50.10210:FF:000001">
    <property type="entry name" value="Nicotinate-nucleotide--dimethylbenzimidazole phosphoribosyltransferase"/>
    <property type="match status" value="1"/>
</dbReference>
<dbReference type="Gene3D" id="1.10.1610.10">
    <property type="match status" value="1"/>
</dbReference>
<dbReference type="Gene3D" id="3.40.50.10210">
    <property type="match status" value="1"/>
</dbReference>
<dbReference type="HAMAP" id="MF_00230">
    <property type="entry name" value="CobT"/>
    <property type="match status" value="1"/>
</dbReference>
<dbReference type="InterPro" id="IPR003200">
    <property type="entry name" value="Nict_dMeBzImd_PRibTrfase"/>
</dbReference>
<dbReference type="InterPro" id="IPR017846">
    <property type="entry name" value="Nict_dMeBzImd_PRibTrfase_bact"/>
</dbReference>
<dbReference type="InterPro" id="IPR023195">
    <property type="entry name" value="Nict_dMeBzImd_PRibTrfase_N"/>
</dbReference>
<dbReference type="InterPro" id="IPR036087">
    <property type="entry name" value="Nict_dMeBzImd_PRibTrfase_sf"/>
</dbReference>
<dbReference type="NCBIfam" id="TIGR03160">
    <property type="entry name" value="cobT_DBIPRT"/>
    <property type="match status" value="1"/>
</dbReference>
<dbReference type="NCBIfam" id="NF000996">
    <property type="entry name" value="PRK00105.1"/>
    <property type="match status" value="1"/>
</dbReference>
<dbReference type="PANTHER" id="PTHR43463">
    <property type="entry name" value="NICOTINATE-NUCLEOTIDE--DIMETHYLBENZIMIDAZOLE PHOSPHORIBOSYLTRANSFERASE"/>
    <property type="match status" value="1"/>
</dbReference>
<dbReference type="PANTHER" id="PTHR43463:SF1">
    <property type="entry name" value="NICOTINATE-NUCLEOTIDE--DIMETHYLBENZIMIDAZOLE PHOSPHORIBOSYLTRANSFERASE"/>
    <property type="match status" value="1"/>
</dbReference>
<dbReference type="Pfam" id="PF02277">
    <property type="entry name" value="DBI_PRT"/>
    <property type="match status" value="1"/>
</dbReference>
<dbReference type="SUPFAM" id="SSF52733">
    <property type="entry name" value="Nicotinate mononucleotide:5,6-dimethylbenzimidazole phosphoribosyltransferase (CobT)"/>
    <property type="match status" value="1"/>
</dbReference>
<evidence type="ECO:0000255" key="1">
    <source>
        <dbReference type="HAMAP-Rule" id="MF_00230"/>
    </source>
</evidence>
<sequence>MQTLADLLNTIPAIDPAAMSRAQRHIDGLLKPVGSLGRLEALAIQLAGMPGLNGIPHVGKKAVLVMCADHGVWEEGVAISPKEVTAIQAENMTRGTTGVCVLAAQAGANVHVVDVGIDSAEPIPGLINMRVARGSGNIASAPAMSRRQAEKLLLDVICYTRELAKNGVTLFGVGELGMANTTPAAAIVSTITGRDPEEVVGIGANLPTDKLANKIDVVRRAITLNQPNPQDGIDVLAKVGGFDLVGIAGVMLGAASCGLPVLLDGFLSYAAALAACQMSPAIKPYLIPSHLSVEKGARIALSHLGLEPYLNMDMRLGEGSGAALAMPIIEAACAIYNNMGELAASNIVLPGNTTSDLNS</sequence>
<accession>A8A1K5</accession>
<feature type="chain" id="PRO_1000058765" description="Nicotinate-nucleotide--dimethylbenzimidazole phosphoribosyltransferase">
    <location>
        <begin position="1"/>
        <end position="359"/>
    </location>
</feature>
<feature type="active site" description="Proton acceptor" evidence="1">
    <location>
        <position position="318"/>
    </location>
</feature>
<reference key="1">
    <citation type="journal article" date="2008" name="J. Bacteriol.">
        <title>The pangenome structure of Escherichia coli: comparative genomic analysis of E. coli commensal and pathogenic isolates.</title>
        <authorList>
            <person name="Rasko D.A."/>
            <person name="Rosovitz M.J."/>
            <person name="Myers G.S.A."/>
            <person name="Mongodin E.F."/>
            <person name="Fricke W.F."/>
            <person name="Gajer P."/>
            <person name="Crabtree J."/>
            <person name="Sebaihia M."/>
            <person name="Thomson N.R."/>
            <person name="Chaudhuri R."/>
            <person name="Henderson I.R."/>
            <person name="Sperandio V."/>
            <person name="Ravel J."/>
        </authorList>
    </citation>
    <scope>NUCLEOTIDE SEQUENCE [LARGE SCALE GENOMIC DNA]</scope>
    <source>
        <strain>HS</strain>
    </source>
</reference>
<keyword id="KW-0169">Cobalamin biosynthesis</keyword>
<keyword id="KW-0328">Glycosyltransferase</keyword>
<keyword id="KW-0808">Transferase</keyword>
<organism>
    <name type="scientific">Escherichia coli O9:H4 (strain HS)</name>
    <dbReference type="NCBI Taxonomy" id="331112"/>
    <lineage>
        <taxon>Bacteria</taxon>
        <taxon>Pseudomonadati</taxon>
        <taxon>Pseudomonadota</taxon>
        <taxon>Gammaproteobacteria</taxon>
        <taxon>Enterobacterales</taxon>
        <taxon>Enterobacteriaceae</taxon>
        <taxon>Escherichia</taxon>
    </lineage>
</organism>
<name>COBT_ECOHS</name>
<proteinExistence type="inferred from homology"/>
<comment type="function">
    <text evidence="1">Catalyzes the synthesis of alpha-ribazole-5'-phosphate from nicotinate mononucleotide (NAMN) and 5,6-dimethylbenzimidazole (DMB).</text>
</comment>
<comment type="catalytic activity">
    <reaction evidence="1">
        <text>5,6-dimethylbenzimidazole + nicotinate beta-D-ribonucleotide = alpha-ribazole 5'-phosphate + nicotinate + H(+)</text>
        <dbReference type="Rhea" id="RHEA:11196"/>
        <dbReference type="ChEBI" id="CHEBI:15378"/>
        <dbReference type="ChEBI" id="CHEBI:15890"/>
        <dbReference type="ChEBI" id="CHEBI:32544"/>
        <dbReference type="ChEBI" id="CHEBI:57502"/>
        <dbReference type="ChEBI" id="CHEBI:57918"/>
        <dbReference type="EC" id="2.4.2.21"/>
    </reaction>
</comment>
<comment type="pathway">
    <text evidence="1">Nucleoside biosynthesis; alpha-ribazole biosynthesis; alpha-ribazole from 5,6-dimethylbenzimidazole: step 1/2.</text>
</comment>
<comment type="subunit">
    <text evidence="1">Homodimer.</text>
</comment>
<comment type="similarity">
    <text evidence="1">Belongs to the CobT family.</text>
</comment>
<protein>
    <recommendedName>
        <fullName evidence="1">Nicotinate-nucleotide--dimethylbenzimidazole phosphoribosyltransferase</fullName>
        <shortName evidence="1">NN:DBI PRT</shortName>
        <ecNumber evidence="1">2.4.2.21</ecNumber>
    </recommendedName>
    <alternativeName>
        <fullName evidence="1">N(1)-alpha-phosphoribosyltransferase</fullName>
    </alternativeName>
</protein>